<name>EEVS_STRGA</name>
<organism>
    <name type="scientific">Streptomyces glaucescens</name>
    <dbReference type="NCBI Taxonomy" id="1907"/>
    <lineage>
        <taxon>Bacteria</taxon>
        <taxon>Bacillati</taxon>
        <taxon>Actinomycetota</taxon>
        <taxon>Actinomycetes</taxon>
        <taxon>Kitasatosporales</taxon>
        <taxon>Streptomycetaceae</taxon>
        <taxon>Streptomyces</taxon>
    </lineage>
</organism>
<comment type="function">
    <text evidence="2 5">Catalyzes the cyclization of D-sedoheptulose 7-phosphate to 2-epi-5-epi-valiolone (PubMed:28182402). Probably involved in acarbose biosynthesis (Probable).</text>
</comment>
<comment type="catalytic activity">
    <reaction evidence="2">
        <text>D-sedoheptulose 7-phosphate = 2-epi-5-epi-valiolone + phosphate</text>
        <dbReference type="Rhea" id="RHEA:44184"/>
        <dbReference type="ChEBI" id="CHEBI:43474"/>
        <dbReference type="ChEBI" id="CHEBI:57483"/>
        <dbReference type="ChEBI" id="CHEBI:84187"/>
        <dbReference type="EC" id="4.2.3.152"/>
    </reaction>
</comment>
<comment type="cofactor">
    <cofactor evidence="2">
        <name>NAD(+)</name>
        <dbReference type="ChEBI" id="CHEBI:57540"/>
    </cofactor>
</comment>
<comment type="cofactor">
    <cofactor evidence="2">
        <name>Co(2+)</name>
        <dbReference type="ChEBI" id="CHEBI:48828"/>
    </cofactor>
    <cofactor evidence="2">
        <name>Zn(2+)</name>
        <dbReference type="ChEBI" id="CHEBI:29105"/>
    </cofactor>
</comment>
<comment type="similarity">
    <text evidence="4">Belongs to the sugar phosphate cyclases superfamily. EEVS-like family.</text>
</comment>
<accession>B0B0T7</accession>
<dbReference type="EC" id="4.2.3.152" evidence="2"/>
<dbReference type="EMBL" id="AM409314">
    <property type="protein sequence ID" value="CAL64849.1"/>
    <property type="molecule type" value="Genomic_DNA"/>
</dbReference>
<dbReference type="EMBL" id="CP009438">
    <property type="protein sequence ID" value="AIR96235.1"/>
    <property type="molecule type" value="Genomic_DNA"/>
</dbReference>
<dbReference type="RefSeq" id="WP_043497484.1">
    <property type="nucleotide sequence ID" value="NZ_CP009438.1"/>
</dbReference>
<dbReference type="SMR" id="B0B0T7"/>
<dbReference type="STRING" id="1907.SGLAU_01035"/>
<dbReference type="KEGG" id="sgu:SGLAU_01035"/>
<dbReference type="eggNOG" id="COG0337">
    <property type="taxonomic scope" value="Bacteria"/>
</dbReference>
<dbReference type="HOGENOM" id="CLU_001201_0_4_11"/>
<dbReference type="OrthoDB" id="9806583at2"/>
<dbReference type="Proteomes" id="UP000029482">
    <property type="component" value="Chromosome"/>
</dbReference>
<dbReference type="GO" id="GO:0003856">
    <property type="term" value="F:3-dehydroquinate synthase activity"/>
    <property type="evidence" value="ECO:0007669"/>
    <property type="project" value="TreeGrafter"/>
</dbReference>
<dbReference type="GO" id="GO:0046872">
    <property type="term" value="F:metal ion binding"/>
    <property type="evidence" value="ECO:0007669"/>
    <property type="project" value="UniProtKB-KW"/>
</dbReference>
<dbReference type="GO" id="GO:0000166">
    <property type="term" value="F:nucleotide binding"/>
    <property type="evidence" value="ECO:0007669"/>
    <property type="project" value="UniProtKB-KW"/>
</dbReference>
<dbReference type="GO" id="GO:0017000">
    <property type="term" value="P:antibiotic biosynthetic process"/>
    <property type="evidence" value="ECO:0007669"/>
    <property type="project" value="InterPro"/>
</dbReference>
<dbReference type="CDD" id="cd08199">
    <property type="entry name" value="EEVS"/>
    <property type="match status" value="1"/>
</dbReference>
<dbReference type="Gene3D" id="3.40.50.1970">
    <property type="match status" value="1"/>
</dbReference>
<dbReference type="Gene3D" id="1.20.1090.10">
    <property type="entry name" value="Dehydroquinate synthase-like - alpha domain"/>
    <property type="match status" value="1"/>
</dbReference>
<dbReference type="InterPro" id="IPR050071">
    <property type="entry name" value="Dehydroquinate_synthase"/>
</dbReference>
<dbReference type="InterPro" id="IPR030960">
    <property type="entry name" value="DHQS/DOIS_N"/>
</dbReference>
<dbReference type="InterPro" id="IPR056179">
    <property type="entry name" value="DHQS_C"/>
</dbReference>
<dbReference type="InterPro" id="IPR035872">
    <property type="entry name" value="EEVS-like"/>
</dbReference>
<dbReference type="PANTHER" id="PTHR43622:SF3">
    <property type="entry name" value="2-EPI-5-EPI-VALIOLONE SYNTHASE"/>
    <property type="match status" value="1"/>
</dbReference>
<dbReference type="PANTHER" id="PTHR43622">
    <property type="entry name" value="3-DEHYDROQUINATE SYNTHASE"/>
    <property type="match status" value="1"/>
</dbReference>
<dbReference type="Pfam" id="PF01761">
    <property type="entry name" value="DHQ_synthase"/>
    <property type="match status" value="1"/>
</dbReference>
<dbReference type="Pfam" id="PF24621">
    <property type="entry name" value="DHQS_C"/>
    <property type="match status" value="1"/>
</dbReference>
<dbReference type="SUPFAM" id="SSF56796">
    <property type="entry name" value="Dehydroquinate synthase-like"/>
    <property type="match status" value="1"/>
</dbReference>
<gene>
    <name evidence="7" type="primary">gacC</name>
    <name evidence="6" type="ORF">SGLAU_01035</name>
</gene>
<reference key="1">
    <citation type="journal article" date="2009" name="J. Biotechnol.">
        <title>The gac-gene cluster for the production of acarbose from Streptomyces glaucescens GLA.O: identification, isolation and characterization.</title>
        <authorList>
            <person name="Rockser Y."/>
            <person name="Wehmeier U.F."/>
        </authorList>
    </citation>
    <scope>NUCLEOTIDE SEQUENCE [GENOMIC DNA]</scope>
    <scope>FUNCTION</scope>
    <source>
        <strain>DSM 40922 / GLA O</strain>
    </source>
</reference>
<reference key="2">
    <citation type="journal article" date="2015" name="J. Biotechnol.">
        <title>Complete genome sequence of the actinobacterium Streptomyces glaucescens GLA.O (DSM 40922) consisting of a linear chromosome and one linear plasmid.</title>
        <authorList>
            <person name="Ortseifen V."/>
            <person name="Winkler A."/>
            <person name="Albersmeier A."/>
            <person name="Wendler S."/>
            <person name="Puhler A."/>
            <person name="Kalinowski J."/>
            <person name="Ruckert C."/>
        </authorList>
    </citation>
    <scope>NUCLEOTIDE SEQUENCE [LARGE SCALE GENOMIC DNA]</scope>
    <source>
        <strain>DSM 40922 / GLA O</strain>
    </source>
</reference>
<reference key="3">
    <citation type="journal article" date="2017" name="ACS Chem. Biol.">
        <title>Evolution and distribution of C7-cyclitol synthases in prokaryotes and eukaryotes.</title>
        <authorList>
            <person name="Osborn A.R."/>
            <person name="Kean K.M."/>
            <person name="Alseud K.M."/>
            <person name="Almabruk K.H."/>
            <person name="Asamizu S."/>
            <person name="Lee J.A."/>
            <person name="Karplus P.A."/>
            <person name="Mahmud T."/>
        </authorList>
    </citation>
    <scope>FUNCTION</scope>
    <scope>CATALYTIC ACTIVITY</scope>
    <scope>COFACTOR</scope>
    <source>
        <strain>DSM 40922 / GLA O</strain>
    </source>
</reference>
<feature type="chain" id="PRO_0000441286" description="2-epi-5-epi-valiolone synthase">
    <location>
        <begin position="1"/>
        <end position="388"/>
    </location>
</feature>
<feature type="binding site" evidence="1">
    <location>
        <begin position="92"/>
        <end position="95"/>
    </location>
    <ligand>
        <name>NAD(+)</name>
        <dbReference type="ChEBI" id="CHEBI:57540"/>
    </ligand>
</feature>
<feature type="binding site" evidence="1">
    <location>
        <begin position="124"/>
        <end position="128"/>
    </location>
    <ligand>
        <name>NAD(+)</name>
        <dbReference type="ChEBI" id="CHEBI:57540"/>
    </ligand>
</feature>
<feature type="binding site" evidence="1">
    <location>
        <begin position="148"/>
        <end position="149"/>
    </location>
    <ligand>
        <name>NAD(+)</name>
        <dbReference type="ChEBI" id="CHEBI:57540"/>
    </ligand>
</feature>
<feature type="binding site" evidence="1">
    <location>
        <position position="161"/>
    </location>
    <ligand>
        <name>NAD(+)</name>
        <dbReference type="ChEBI" id="CHEBI:57540"/>
    </ligand>
</feature>
<feature type="binding site" evidence="1">
    <location>
        <position position="170"/>
    </location>
    <ligand>
        <name>NAD(+)</name>
        <dbReference type="ChEBI" id="CHEBI:57540"/>
    </ligand>
</feature>
<feature type="binding site" evidence="1">
    <location>
        <begin position="188"/>
        <end position="191"/>
    </location>
    <ligand>
        <name>NAD(+)</name>
        <dbReference type="ChEBI" id="CHEBI:57540"/>
    </ligand>
</feature>
<feature type="binding site" evidence="1">
    <location>
        <position position="203"/>
    </location>
    <ligand>
        <name>Zn(2+)</name>
        <dbReference type="ChEBI" id="CHEBI:29105"/>
    </ligand>
</feature>
<feature type="binding site" evidence="1">
    <location>
        <position position="267"/>
    </location>
    <ligand>
        <name>Zn(2+)</name>
        <dbReference type="ChEBI" id="CHEBI:29105"/>
    </ligand>
</feature>
<feature type="binding site" evidence="1">
    <location>
        <position position="283"/>
    </location>
    <ligand>
        <name>Zn(2+)</name>
        <dbReference type="ChEBI" id="CHEBI:29105"/>
    </ligand>
</feature>
<protein>
    <recommendedName>
        <fullName evidence="3">2-epi-5-epi-valiolone synthase</fullName>
        <shortName evidence="3">EEVS</shortName>
        <ecNumber evidence="2">4.2.3.152</ecNumber>
    </recommendedName>
</protein>
<keyword id="KW-0170">Cobalt</keyword>
<keyword id="KW-0456">Lyase</keyword>
<keyword id="KW-0479">Metal-binding</keyword>
<keyword id="KW-0520">NAD</keyword>
<keyword id="KW-0547">Nucleotide-binding</keyword>
<keyword id="KW-1185">Reference proteome</keyword>
<keyword id="KW-0862">Zinc</keyword>
<evidence type="ECO:0000250" key="1">
    <source>
        <dbReference type="UniProtKB" id="Q3M6C3"/>
    </source>
</evidence>
<evidence type="ECO:0000269" key="2">
    <source>
    </source>
</evidence>
<evidence type="ECO:0000303" key="3">
    <source>
    </source>
</evidence>
<evidence type="ECO:0000305" key="4"/>
<evidence type="ECO:0000305" key="5">
    <source>
    </source>
</evidence>
<evidence type="ECO:0000312" key="6">
    <source>
        <dbReference type="EMBL" id="AIR96235.1"/>
    </source>
</evidence>
<evidence type="ECO:0000312" key="7">
    <source>
        <dbReference type="EMBL" id="CAL64849.1"/>
    </source>
</evidence>
<proteinExistence type="evidence at protein level"/>
<sequence>MSGQALAQLEGVREDAGGFDLLAPDGTQYRVDVTDGVFDPHNPLLAGYVAGRRVVAFVGPTVDRIYGDRLRAYLDARLEPGSWSVHTIDSGERNKTLASVERVCAIAKASGLDRHGVMLAVGGGIVADIVGFAASMYARGIRYIKVNTTLVGQVDVGVGVKTGVNALNTKNMFGAYHPAHASLNDPALLATLPAREIRCGLAEIVKMAVILDAGLFEALEEHPDAFLRSSDGALETYVVRTSMRLMMEELCPNLREHDLARLVDFGHTFSPVIETAGGHRLEHGEAVAVDMALSAHLARLLGLADAESCRRVVTLLRRIGLPVFDPATCTPELMTQALHASWQRRGRELHLVVPTGIGKATFVERLEDVPAEVLRAALDALAREGRTS</sequence>